<protein>
    <recommendedName>
        <fullName>Cu-Zn superoxide dismutase-like protein</fullName>
    </recommendedName>
</protein>
<name>SODL_CAMPS</name>
<gene>
    <name type="ordered locus">CMP162R</name>
</gene>
<organism>
    <name type="scientific">Camelpox virus (strain CMS)</name>
    <dbReference type="NCBI Taxonomy" id="203172"/>
    <lineage>
        <taxon>Viruses</taxon>
        <taxon>Varidnaviria</taxon>
        <taxon>Bamfordvirae</taxon>
        <taxon>Nucleocytoviricota</taxon>
        <taxon>Pokkesviricetes</taxon>
        <taxon>Chitovirales</taxon>
        <taxon>Poxviridae</taxon>
        <taxon>Chordopoxvirinae</taxon>
        <taxon>Orthopoxvirus</taxon>
        <taxon>Camelpox virus</taxon>
    </lineage>
</organism>
<proteinExistence type="inferred from homology"/>
<feature type="chain" id="PRO_0000164172" description="Cu-Zn superoxide dismutase-like protein">
    <location>
        <begin position="1"/>
        <end position="125"/>
    </location>
</feature>
<feature type="disulfide bond" evidence="1">
    <location>
        <begin position="52"/>
        <end position="102"/>
    </location>
</feature>
<organismHost>
    <name type="scientific">Camelus</name>
    <dbReference type="NCBI Taxonomy" id="9836"/>
</organismHost>
<dbReference type="EMBL" id="AY009089">
    <property type="protein sequence ID" value="AAG37661.1"/>
    <property type="molecule type" value="Genomic_DNA"/>
</dbReference>
<dbReference type="SMR" id="Q775N4"/>
<dbReference type="Proteomes" id="UP000107153">
    <property type="component" value="Genome"/>
</dbReference>
<dbReference type="GO" id="GO:0030430">
    <property type="term" value="C:host cell cytoplasm"/>
    <property type="evidence" value="ECO:0007669"/>
    <property type="project" value="UniProtKB-SubCell"/>
</dbReference>
<dbReference type="GO" id="GO:0046872">
    <property type="term" value="F:metal ion binding"/>
    <property type="evidence" value="ECO:0007669"/>
    <property type="project" value="InterPro"/>
</dbReference>
<dbReference type="GO" id="GO:0006801">
    <property type="term" value="P:superoxide metabolic process"/>
    <property type="evidence" value="ECO:0007669"/>
    <property type="project" value="InterPro"/>
</dbReference>
<dbReference type="Gene3D" id="2.60.40.200">
    <property type="entry name" value="Superoxide dismutase, copper/zinc binding domain"/>
    <property type="match status" value="1"/>
</dbReference>
<dbReference type="InterPro" id="IPR036423">
    <property type="entry name" value="SOD-like_Cu/Zn_dom_sf"/>
</dbReference>
<dbReference type="SUPFAM" id="SSF49329">
    <property type="entry name" value="Cu,Zn superoxide dismutase-like"/>
    <property type="match status" value="1"/>
</dbReference>
<evidence type="ECO:0000250" key="1"/>
<evidence type="ECO:0000305" key="2"/>
<sequence length="125" mass="13717">MAVCIIDHDNIRGVIYFEPVHGKDKVLGSVIGLKSGTYNLIIHRYGDISRGCDSIGSPEIFIGNIFVNRYGVAYVYLDTDVNISTIIGKALSISKNNQRLACGVIGISYINEKIIHFLTINENGV</sequence>
<accession>Q775N4</accession>
<reference key="1">
    <citation type="journal article" date="2002" name="J. Gen. Virol.">
        <title>The sequence of camelpox virus shows it is most closely related to variola virus, the cause of smallpox.</title>
        <authorList>
            <person name="Gubser C."/>
            <person name="Smith G.L."/>
        </authorList>
    </citation>
    <scope>NUCLEOTIDE SEQUENCE [LARGE SCALE GENOMIC DNA]</scope>
</reference>
<comment type="function">
    <text evidence="1">Virion protein with no enzymatic activity.</text>
</comment>
<comment type="subcellular location">
    <subcellularLocation>
        <location evidence="1">Host cytoplasm</location>
    </subcellularLocation>
</comment>
<comment type="similarity">
    <text evidence="2">Belongs to the Cu-Zn superoxide dismutase family.</text>
</comment>
<keyword id="KW-1015">Disulfide bond</keyword>
<keyword id="KW-1035">Host cytoplasm</keyword>
<keyword id="KW-1185">Reference proteome</keyword>